<proteinExistence type="inferred from homology"/>
<gene>
    <name evidence="1" type="primary">rpsK</name>
    <name type="ordered locus">Deide_18650</name>
</gene>
<name>RS11_DEIDV</name>
<feature type="chain" id="PRO_1000214358" description="Small ribosomal subunit protein uS11">
    <location>
        <begin position="1"/>
        <end position="131"/>
    </location>
</feature>
<reference key="1">
    <citation type="journal article" date="2009" name="PLoS Genet.">
        <title>Alliance of proteomics and genomics to unravel the specificities of Sahara bacterium Deinococcus deserti.</title>
        <authorList>
            <person name="de Groot A."/>
            <person name="Dulermo R."/>
            <person name="Ortet P."/>
            <person name="Blanchard L."/>
            <person name="Guerin P."/>
            <person name="Fernandez B."/>
            <person name="Vacherie B."/>
            <person name="Dossat C."/>
            <person name="Jolivet E."/>
            <person name="Siguier P."/>
            <person name="Chandler M."/>
            <person name="Barakat M."/>
            <person name="Dedieu A."/>
            <person name="Barbe V."/>
            <person name="Heulin T."/>
            <person name="Sommer S."/>
            <person name="Achouak W."/>
            <person name="Armengaud J."/>
        </authorList>
    </citation>
    <scope>NUCLEOTIDE SEQUENCE [LARGE SCALE GENOMIC DNA]</scope>
    <source>
        <strain>DSM 17065 / CIP 109153 / LMG 22923 / VCD115</strain>
    </source>
</reference>
<comment type="function">
    <text evidence="1">Located on the platform of the 30S subunit, it bridges several disparate RNA helices of the 16S rRNA. Forms part of the Shine-Dalgarno cleft in the 70S ribosome.</text>
</comment>
<comment type="subunit">
    <text evidence="1">Part of the 30S ribosomal subunit. Interacts with proteins S7 and S18. Binds to IF-3.</text>
</comment>
<comment type="similarity">
    <text evidence="1">Belongs to the universal ribosomal protein uS11 family.</text>
</comment>
<accession>C1CXD6</accession>
<protein>
    <recommendedName>
        <fullName evidence="1">Small ribosomal subunit protein uS11</fullName>
    </recommendedName>
    <alternativeName>
        <fullName evidence="2">30S ribosomal protein S11</fullName>
    </alternativeName>
</protein>
<sequence>MAKPTKGKAPRRARRNISAGRAYVHASYNNTIVTITDLDGNSVAWSSGGTIGYKGSKKGTPYAAQLAAADAVKKAQQTFGMNIVDVIVRGSGSGREQAIRAIQASGIEVKSIMDDTPVPHNGCRPKKKFRA</sequence>
<evidence type="ECO:0000255" key="1">
    <source>
        <dbReference type="HAMAP-Rule" id="MF_01310"/>
    </source>
</evidence>
<evidence type="ECO:0000305" key="2"/>
<dbReference type="EMBL" id="CP001114">
    <property type="protein sequence ID" value="ACO46853.1"/>
    <property type="molecule type" value="Genomic_DNA"/>
</dbReference>
<dbReference type="RefSeq" id="WP_012693975.1">
    <property type="nucleotide sequence ID" value="NC_012526.1"/>
</dbReference>
<dbReference type="SMR" id="C1CXD6"/>
<dbReference type="STRING" id="546414.Deide_18650"/>
<dbReference type="PaxDb" id="546414-Deide_18650"/>
<dbReference type="KEGG" id="ddr:Deide_18650"/>
<dbReference type="eggNOG" id="COG0100">
    <property type="taxonomic scope" value="Bacteria"/>
</dbReference>
<dbReference type="HOGENOM" id="CLU_072439_5_0_0"/>
<dbReference type="OrthoDB" id="9806415at2"/>
<dbReference type="Proteomes" id="UP000002208">
    <property type="component" value="Chromosome"/>
</dbReference>
<dbReference type="GO" id="GO:1990904">
    <property type="term" value="C:ribonucleoprotein complex"/>
    <property type="evidence" value="ECO:0007669"/>
    <property type="project" value="UniProtKB-KW"/>
</dbReference>
<dbReference type="GO" id="GO:0005840">
    <property type="term" value="C:ribosome"/>
    <property type="evidence" value="ECO:0007669"/>
    <property type="project" value="UniProtKB-KW"/>
</dbReference>
<dbReference type="GO" id="GO:0019843">
    <property type="term" value="F:rRNA binding"/>
    <property type="evidence" value="ECO:0007669"/>
    <property type="project" value="UniProtKB-UniRule"/>
</dbReference>
<dbReference type="GO" id="GO:0003735">
    <property type="term" value="F:structural constituent of ribosome"/>
    <property type="evidence" value="ECO:0007669"/>
    <property type="project" value="InterPro"/>
</dbReference>
<dbReference type="GO" id="GO:0006412">
    <property type="term" value="P:translation"/>
    <property type="evidence" value="ECO:0007669"/>
    <property type="project" value="UniProtKB-UniRule"/>
</dbReference>
<dbReference type="FunFam" id="3.30.420.80:FF:000010">
    <property type="entry name" value="30S ribosomal protein S11"/>
    <property type="match status" value="1"/>
</dbReference>
<dbReference type="Gene3D" id="3.30.420.80">
    <property type="entry name" value="Ribosomal protein S11"/>
    <property type="match status" value="1"/>
</dbReference>
<dbReference type="HAMAP" id="MF_01310">
    <property type="entry name" value="Ribosomal_uS11"/>
    <property type="match status" value="1"/>
</dbReference>
<dbReference type="InterPro" id="IPR001971">
    <property type="entry name" value="Ribosomal_uS11"/>
</dbReference>
<dbReference type="InterPro" id="IPR019981">
    <property type="entry name" value="Ribosomal_uS11_bac-type"/>
</dbReference>
<dbReference type="InterPro" id="IPR018102">
    <property type="entry name" value="Ribosomal_uS11_CS"/>
</dbReference>
<dbReference type="InterPro" id="IPR036967">
    <property type="entry name" value="Ribosomal_uS11_sf"/>
</dbReference>
<dbReference type="NCBIfam" id="NF003698">
    <property type="entry name" value="PRK05309.1"/>
    <property type="match status" value="1"/>
</dbReference>
<dbReference type="NCBIfam" id="TIGR03632">
    <property type="entry name" value="uS11_bact"/>
    <property type="match status" value="1"/>
</dbReference>
<dbReference type="PANTHER" id="PTHR11759">
    <property type="entry name" value="40S RIBOSOMAL PROTEIN S14/30S RIBOSOMAL PROTEIN S11"/>
    <property type="match status" value="1"/>
</dbReference>
<dbReference type="Pfam" id="PF00411">
    <property type="entry name" value="Ribosomal_S11"/>
    <property type="match status" value="1"/>
</dbReference>
<dbReference type="PIRSF" id="PIRSF002131">
    <property type="entry name" value="Ribosomal_S11"/>
    <property type="match status" value="1"/>
</dbReference>
<dbReference type="SUPFAM" id="SSF53137">
    <property type="entry name" value="Translational machinery components"/>
    <property type="match status" value="1"/>
</dbReference>
<dbReference type="PROSITE" id="PS00054">
    <property type="entry name" value="RIBOSOMAL_S11"/>
    <property type="match status" value="1"/>
</dbReference>
<organism>
    <name type="scientific">Deinococcus deserti (strain DSM 17065 / CIP 109153 / LMG 22923 / VCD115)</name>
    <dbReference type="NCBI Taxonomy" id="546414"/>
    <lineage>
        <taxon>Bacteria</taxon>
        <taxon>Thermotogati</taxon>
        <taxon>Deinococcota</taxon>
        <taxon>Deinococci</taxon>
        <taxon>Deinococcales</taxon>
        <taxon>Deinococcaceae</taxon>
        <taxon>Deinococcus</taxon>
    </lineage>
</organism>
<keyword id="KW-1185">Reference proteome</keyword>
<keyword id="KW-0687">Ribonucleoprotein</keyword>
<keyword id="KW-0689">Ribosomal protein</keyword>
<keyword id="KW-0694">RNA-binding</keyword>
<keyword id="KW-0699">rRNA-binding</keyword>